<gene>
    <name evidence="1" type="primary">rpmA</name>
    <name type="ordered locus">PTH_0831</name>
</gene>
<keyword id="KW-1185">Reference proteome</keyword>
<keyword id="KW-0687">Ribonucleoprotein</keyword>
<keyword id="KW-0689">Ribosomal protein</keyword>
<reference key="1">
    <citation type="journal article" date="2008" name="Genome Res.">
        <title>The genome of Pelotomaculum thermopropionicum reveals niche-associated evolution in anaerobic microbiota.</title>
        <authorList>
            <person name="Kosaka T."/>
            <person name="Kato S."/>
            <person name="Shimoyama T."/>
            <person name="Ishii S."/>
            <person name="Abe T."/>
            <person name="Watanabe K."/>
        </authorList>
    </citation>
    <scope>NUCLEOTIDE SEQUENCE [LARGE SCALE GENOMIC DNA]</scope>
    <source>
        <strain>DSM 13744 / JCM 10971 / SI</strain>
    </source>
</reference>
<feature type="chain" id="PRO_1000128785" description="Large ribosomal subunit protein bL27">
    <location>
        <begin position="1"/>
        <end position="88"/>
    </location>
</feature>
<feature type="region of interest" description="Disordered" evidence="2">
    <location>
        <begin position="1"/>
        <end position="21"/>
    </location>
</feature>
<proteinExistence type="inferred from homology"/>
<evidence type="ECO:0000255" key="1">
    <source>
        <dbReference type="HAMAP-Rule" id="MF_00539"/>
    </source>
</evidence>
<evidence type="ECO:0000256" key="2">
    <source>
        <dbReference type="SAM" id="MobiDB-lite"/>
    </source>
</evidence>
<evidence type="ECO:0000305" key="3"/>
<accession>A5D408</accession>
<dbReference type="EMBL" id="AP009389">
    <property type="protein sequence ID" value="BAF59012.1"/>
    <property type="molecule type" value="Genomic_DNA"/>
</dbReference>
<dbReference type="SMR" id="A5D408"/>
<dbReference type="STRING" id="370438.PTH_0831"/>
<dbReference type="KEGG" id="pth:PTH_0831"/>
<dbReference type="eggNOG" id="COG0211">
    <property type="taxonomic scope" value="Bacteria"/>
</dbReference>
<dbReference type="HOGENOM" id="CLU_095424_4_0_9"/>
<dbReference type="Proteomes" id="UP000006556">
    <property type="component" value="Chromosome"/>
</dbReference>
<dbReference type="GO" id="GO:0022625">
    <property type="term" value="C:cytosolic large ribosomal subunit"/>
    <property type="evidence" value="ECO:0007669"/>
    <property type="project" value="TreeGrafter"/>
</dbReference>
<dbReference type="GO" id="GO:0003735">
    <property type="term" value="F:structural constituent of ribosome"/>
    <property type="evidence" value="ECO:0007669"/>
    <property type="project" value="InterPro"/>
</dbReference>
<dbReference type="GO" id="GO:0006412">
    <property type="term" value="P:translation"/>
    <property type="evidence" value="ECO:0007669"/>
    <property type="project" value="UniProtKB-UniRule"/>
</dbReference>
<dbReference type="FunFam" id="2.40.50.100:FF:000004">
    <property type="entry name" value="50S ribosomal protein L27"/>
    <property type="match status" value="1"/>
</dbReference>
<dbReference type="Gene3D" id="2.40.50.100">
    <property type="match status" value="1"/>
</dbReference>
<dbReference type="HAMAP" id="MF_00539">
    <property type="entry name" value="Ribosomal_bL27"/>
    <property type="match status" value="1"/>
</dbReference>
<dbReference type="InterPro" id="IPR001684">
    <property type="entry name" value="Ribosomal_bL27"/>
</dbReference>
<dbReference type="InterPro" id="IPR018261">
    <property type="entry name" value="Ribosomal_bL27_CS"/>
</dbReference>
<dbReference type="NCBIfam" id="TIGR00062">
    <property type="entry name" value="L27"/>
    <property type="match status" value="1"/>
</dbReference>
<dbReference type="PANTHER" id="PTHR15893:SF0">
    <property type="entry name" value="LARGE RIBOSOMAL SUBUNIT PROTEIN BL27M"/>
    <property type="match status" value="1"/>
</dbReference>
<dbReference type="PANTHER" id="PTHR15893">
    <property type="entry name" value="RIBOSOMAL PROTEIN L27"/>
    <property type="match status" value="1"/>
</dbReference>
<dbReference type="Pfam" id="PF01016">
    <property type="entry name" value="Ribosomal_L27"/>
    <property type="match status" value="1"/>
</dbReference>
<dbReference type="PRINTS" id="PR00063">
    <property type="entry name" value="RIBOSOMALL27"/>
</dbReference>
<dbReference type="SUPFAM" id="SSF110324">
    <property type="entry name" value="Ribosomal L27 protein-like"/>
    <property type="match status" value="1"/>
</dbReference>
<dbReference type="PROSITE" id="PS00831">
    <property type="entry name" value="RIBOSOMAL_L27"/>
    <property type="match status" value="1"/>
</dbReference>
<sequence>MAHKKGVGSSRNGRDSQPKMLGVKRADGQFVLAGSILVRQRGTRIHPGRNVGRGGDDTLFAKVDGVVSFERSGRDKKTVSVIPVEAAL</sequence>
<organism>
    <name type="scientific">Pelotomaculum thermopropionicum (strain DSM 13744 / JCM 10971 / SI)</name>
    <dbReference type="NCBI Taxonomy" id="370438"/>
    <lineage>
        <taxon>Bacteria</taxon>
        <taxon>Bacillati</taxon>
        <taxon>Bacillota</taxon>
        <taxon>Clostridia</taxon>
        <taxon>Eubacteriales</taxon>
        <taxon>Desulfotomaculaceae</taxon>
        <taxon>Pelotomaculum</taxon>
    </lineage>
</organism>
<protein>
    <recommendedName>
        <fullName evidence="1">Large ribosomal subunit protein bL27</fullName>
    </recommendedName>
    <alternativeName>
        <fullName evidence="3">50S ribosomal protein L27</fullName>
    </alternativeName>
</protein>
<name>RL27_PELTS</name>
<comment type="similarity">
    <text evidence="1">Belongs to the bacterial ribosomal protein bL27 family.</text>
</comment>